<sequence length="395" mass="44637">MWLLLVTSVLSAFGGAHGLFGKLGPKNPEANMNVSQMITYWGYPSEEYEVVTEDGYILGVYRIPYGKKNSENIGKRPVAYLQHGLIASATNWITNLPNNSLAFILADAGYDVWLGNSRGNTWSRKNVYYSPDSVEFWAFSFDEMAKYDLPATIDFIVQKTGQEKIHYVGHSQGTTIGFIAFSTNPALAKKIKRFYALAPVATVKYTESPFKKISLIPKFLLKVIFGNKMFMPHNYLDQFLGTEVCSRELLDLLCSNALFIFCGFDKKNLNVSRFDVYLGHNPAGTSTQDLFHWAQLAKSGKLQAYNWGSPLQNMLHYNQKTPPYYDVSAMTVPIAVWNGGHDILADPQDVAMLLPKLPNLLYHKEILPYNHLDFIWAMDAPQEVYNEIVTMMAED</sequence>
<name>LIPF_MOUSE</name>
<dbReference type="EC" id="3.1.1.3" evidence="1"/>
<dbReference type="EMBL" id="AK009300">
    <property type="protein sequence ID" value="BAB26201.1"/>
    <property type="molecule type" value="mRNA"/>
</dbReference>
<dbReference type="EMBL" id="AK009359">
    <property type="protein sequence ID" value="BAB26240.1"/>
    <property type="molecule type" value="mRNA"/>
</dbReference>
<dbReference type="EMBL" id="AK009413">
    <property type="protein sequence ID" value="BAB26272.1"/>
    <property type="molecule type" value="mRNA"/>
</dbReference>
<dbReference type="EMBL" id="AK009428">
    <property type="protein sequence ID" value="BAB26280.1"/>
    <property type="molecule type" value="mRNA"/>
</dbReference>
<dbReference type="EMBL" id="AK009431">
    <property type="protein sequence ID" value="BAB26283.1"/>
    <property type="molecule type" value="mRNA"/>
</dbReference>
<dbReference type="EMBL" id="AK009437">
    <property type="protein sequence ID" value="BAB26287.1"/>
    <property type="molecule type" value="mRNA"/>
</dbReference>
<dbReference type="EMBL" id="AK009459">
    <property type="protein sequence ID" value="BAB26300.1"/>
    <property type="molecule type" value="mRNA"/>
</dbReference>
<dbReference type="EMBL" id="AK009473">
    <property type="protein sequence ID" value="BAB26312.1"/>
    <property type="molecule type" value="mRNA"/>
</dbReference>
<dbReference type="EMBL" id="AK009474">
    <property type="protein sequence ID" value="BAB26313.1"/>
    <property type="molecule type" value="mRNA"/>
</dbReference>
<dbReference type="EMBL" id="AK009479">
    <property type="protein sequence ID" value="BAB26316.1"/>
    <property type="molecule type" value="mRNA"/>
</dbReference>
<dbReference type="EMBL" id="AK009523">
    <property type="protein sequence ID" value="BAB26338.1"/>
    <property type="molecule type" value="mRNA"/>
</dbReference>
<dbReference type="EMBL" id="AK009525">
    <property type="protein sequence ID" value="BAB26339.1"/>
    <property type="molecule type" value="mRNA"/>
</dbReference>
<dbReference type="EMBL" id="AK009537">
    <property type="protein sequence ID" value="BAB26346.1"/>
    <property type="molecule type" value="mRNA"/>
</dbReference>
<dbReference type="EMBL" id="AK009544">
    <property type="protein sequence ID" value="BAB26350.1"/>
    <property type="molecule type" value="mRNA"/>
</dbReference>
<dbReference type="EMBL" id="AK009546">
    <property type="protein sequence ID" value="BAB26352.1"/>
    <property type="molecule type" value="mRNA"/>
</dbReference>
<dbReference type="EMBL" id="AK009560">
    <property type="protein sequence ID" value="BAB26359.1"/>
    <property type="molecule type" value="mRNA"/>
</dbReference>
<dbReference type="EMBL" id="AK009571">
    <property type="protein sequence ID" value="BAB26368.1"/>
    <property type="molecule type" value="mRNA"/>
</dbReference>
<dbReference type="EMBL" id="AK009573">
    <property type="protein sequence ID" value="BAB26370.1"/>
    <property type="molecule type" value="mRNA"/>
</dbReference>
<dbReference type="EMBL" id="AK009729">
    <property type="protein sequence ID" value="BAB26466.1"/>
    <property type="molecule type" value="mRNA"/>
</dbReference>
<dbReference type="EMBL" id="AK009773">
    <property type="protein sequence ID" value="BAB26495.1"/>
    <property type="molecule type" value="mRNA"/>
</dbReference>
<dbReference type="EMBL" id="AK009875">
    <property type="protein sequence ID" value="BAB26556.1"/>
    <property type="molecule type" value="mRNA"/>
</dbReference>
<dbReference type="EMBL" id="AK009990">
    <property type="protein sequence ID" value="BAB26629.1"/>
    <property type="molecule type" value="mRNA"/>
</dbReference>
<dbReference type="EMBL" id="AK010019">
    <property type="protein sequence ID" value="BAB26647.1"/>
    <property type="molecule type" value="mRNA"/>
</dbReference>
<dbReference type="EMBL" id="AK010026">
    <property type="protein sequence ID" value="BAB26651.1"/>
    <property type="molecule type" value="mRNA"/>
</dbReference>
<dbReference type="EMBL" id="AK010035">
    <property type="protein sequence ID" value="BAB26656.1"/>
    <property type="molecule type" value="mRNA"/>
</dbReference>
<dbReference type="EMBL" id="AK010058">
    <property type="protein sequence ID" value="BAB26673.1"/>
    <property type="molecule type" value="mRNA"/>
</dbReference>
<dbReference type="EMBL" id="AK010061">
    <property type="protein sequence ID" value="BAB26675.1"/>
    <property type="molecule type" value="mRNA"/>
</dbReference>
<dbReference type="EMBL" id="AK010093">
    <property type="protein sequence ID" value="BAB26697.1"/>
    <property type="molecule type" value="mRNA"/>
</dbReference>
<dbReference type="EMBL" id="AK010103">
    <property type="protein sequence ID" value="BAB26703.1"/>
    <property type="molecule type" value="mRNA"/>
</dbReference>
<dbReference type="EMBL" id="AK010106">
    <property type="protein sequence ID" value="BAB26704.1"/>
    <property type="molecule type" value="mRNA"/>
</dbReference>
<dbReference type="EMBL" id="AK010116">
    <property type="protein sequence ID" value="BAB26711.1"/>
    <property type="molecule type" value="mRNA"/>
</dbReference>
<dbReference type="EMBL" id="AK010124">
    <property type="protein sequence ID" value="BAB26715.1"/>
    <property type="molecule type" value="mRNA"/>
</dbReference>
<dbReference type="EMBL" id="AK010125">
    <property type="protein sequence ID" value="BAB26716.1"/>
    <property type="molecule type" value="mRNA"/>
</dbReference>
<dbReference type="EMBL" id="AK010139">
    <property type="protein sequence ID" value="BAB26725.1"/>
    <property type="molecule type" value="mRNA"/>
</dbReference>
<dbReference type="EMBL" id="AK010148">
    <property type="protein sequence ID" value="BAB26733.1"/>
    <property type="molecule type" value="mRNA"/>
</dbReference>
<dbReference type="EMBL" id="AK010173">
    <property type="protein sequence ID" value="BAB26746.1"/>
    <property type="molecule type" value="mRNA"/>
</dbReference>
<dbReference type="EMBL" id="AK010203">
    <property type="protein sequence ID" value="BAB26766.1"/>
    <property type="molecule type" value="mRNA"/>
</dbReference>
<dbReference type="EMBL" id="AK010231">
    <property type="protein sequence ID" value="BAB26784.1"/>
    <property type="molecule type" value="mRNA"/>
</dbReference>
<dbReference type="EMBL" id="AK010236">
    <property type="protein sequence ID" value="BAB26787.1"/>
    <property type="molecule type" value="mRNA"/>
</dbReference>
<dbReference type="EMBL" id="AK075910">
    <property type="protein sequence ID" value="BAC36048.1"/>
    <property type="molecule type" value="mRNA"/>
</dbReference>
<dbReference type="EMBL" id="BC061067">
    <property type="protein sequence ID" value="AAH61067.1"/>
    <property type="molecule type" value="mRNA"/>
</dbReference>
<dbReference type="CCDS" id="CCDS29754.1"/>
<dbReference type="RefSeq" id="NP_080610.1">
    <property type="nucleotide sequence ID" value="NM_026334.3"/>
</dbReference>
<dbReference type="RefSeq" id="XP_017173769.1">
    <property type="nucleotide sequence ID" value="XM_017318280.1"/>
</dbReference>
<dbReference type="SMR" id="Q9CPP7"/>
<dbReference type="FunCoup" id="Q9CPP7">
    <property type="interactions" value="884"/>
</dbReference>
<dbReference type="STRING" id="10090.ENSMUSP00000025680"/>
<dbReference type="ESTHER" id="mouse-1lipg">
    <property type="family name" value="Acidic_Lipase"/>
</dbReference>
<dbReference type="MEROPS" id="S33.A57"/>
<dbReference type="GlyCosmos" id="Q9CPP7">
    <property type="glycosylation" value="2 sites, No reported glycans"/>
</dbReference>
<dbReference type="GlyGen" id="Q9CPP7">
    <property type="glycosylation" value="2 sites"/>
</dbReference>
<dbReference type="PhosphoSitePlus" id="Q9CPP7"/>
<dbReference type="PaxDb" id="10090-ENSMUSP00000025680"/>
<dbReference type="ProteomicsDB" id="292095"/>
<dbReference type="Antibodypedia" id="30193">
    <property type="antibodies" value="211 antibodies from 28 providers"/>
</dbReference>
<dbReference type="DNASU" id="67717"/>
<dbReference type="Ensembl" id="ENSMUST00000025680.5">
    <property type="protein sequence ID" value="ENSMUSP00000025680.5"/>
    <property type="gene ID" value="ENSMUSG00000024768.6"/>
</dbReference>
<dbReference type="GeneID" id="67717"/>
<dbReference type="KEGG" id="mmu:67717"/>
<dbReference type="UCSC" id="uc008hfw.1">
    <property type="organism name" value="mouse"/>
</dbReference>
<dbReference type="AGR" id="MGI:1914967"/>
<dbReference type="CTD" id="8513"/>
<dbReference type="MGI" id="MGI:1914967">
    <property type="gene designation" value="Lipf"/>
</dbReference>
<dbReference type="VEuPathDB" id="HostDB:ENSMUSG00000024768"/>
<dbReference type="eggNOG" id="KOG2624">
    <property type="taxonomic scope" value="Eukaryota"/>
</dbReference>
<dbReference type="GeneTree" id="ENSGT00940000161066"/>
<dbReference type="HOGENOM" id="CLU_010974_0_0_1"/>
<dbReference type="InParanoid" id="Q9CPP7"/>
<dbReference type="OMA" id="WSRRNLY"/>
<dbReference type="OrthoDB" id="9974421at2759"/>
<dbReference type="PhylomeDB" id="Q9CPP7"/>
<dbReference type="TreeFam" id="TF315485"/>
<dbReference type="Reactome" id="R-MMU-192456">
    <property type="pathway name" value="Digestion of dietary lipid"/>
</dbReference>
<dbReference type="BioGRID-ORCS" id="67717">
    <property type="hits" value="3 hits in 80 CRISPR screens"/>
</dbReference>
<dbReference type="PRO" id="PR:Q9CPP7"/>
<dbReference type="Proteomes" id="UP000000589">
    <property type="component" value="Chromosome 19"/>
</dbReference>
<dbReference type="RNAct" id="Q9CPP7">
    <property type="molecule type" value="protein"/>
</dbReference>
<dbReference type="Bgee" id="ENSMUSG00000024768">
    <property type="expression patterns" value="Expressed in trachea and 12 other cell types or tissues"/>
</dbReference>
<dbReference type="GO" id="GO:0005576">
    <property type="term" value="C:extracellular region"/>
    <property type="evidence" value="ECO:0007669"/>
    <property type="project" value="UniProtKB-SubCell"/>
</dbReference>
<dbReference type="GO" id="GO:0005739">
    <property type="term" value="C:mitochondrion"/>
    <property type="evidence" value="ECO:0007669"/>
    <property type="project" value="Ensembl"/>
</dbReference>
<dbReference type="GO" id="GO:0016615">
    <property type="term" value="F:malate dehydrogenase activity"/>
    <property type="evidence" value="ECO:0007669"/>
    <property type="project" value="Ensembl"/>
</dbReference>
<dbReference type="GO" id="GO:0004806">
    <property type="term" value="F:triacylglycerol lipase activity"/>
    <property type="evidence" value="ECO:0000250"/>
    <property type="project" value="UniProtKB"/>
</dbReference>
<dbReference type="GO" id="GO:0016042">
    <property type="term" value="P:lipid catabolic process"/>
    <property type="evidence" value="ECO:0007669"/>
    <property type="project" value="UniProtKB-KW"/>
</dbReference>
<dbReference type="GO" id="GO:0006108">
    <property type="term" value="P:malate metabolic process"/>
    <property type="evidence" value="ECO:0007669"/>
    <property type="project" value="Ensembl"/>
</dbReference>
<dbReference type="FunFam" id="3.40.50.1820:FF:000012">
    <property type="entry name" value="Lipase"/>
    <property type="match status" value="1"/>
</dbReference>
<dbReference type="Gene3D" id="3.40.50.1820">
    <property type="entry name" value="alpha/beta hydrolase"/>
    <property type="match status" value="1"/>
</dbReference>
<dbReference type="InterPro" id="IPR029058">
    <property type="entry name" value="AB_hydrolase_fold"/>
</dbReference>
<dbReference type="InterPro" id="IPR006693">
    <property type="entry name" value="AB_hydrolase_lipase"/>
</dbReference>
<dbReference type="InterPro" id="IPR025483">
    <property type="entry name" value="Lipase_euk"/>
</dbReference>
<dbReference type="PANTHER" id="PTHR11005">
    <property type="entry name" value="LYSOSOMAL ACID LIPASE-RELATED"/>
    <property type="match status" value="1"/>
</dbReference>
<dbReference type="Pfam" id="PF04083">
    <property type="entry name" value="Abhydro_lipase"/>
    <property type="match status" value="1"/>
</dbReference>
<dbReference type="PIRSF" id="PIRSF000862">
    <property type="entry name" value="Steryl_ester_lip"/>
    <property type="match status" value="1"/>
</dbReference>
<dbReference type="SUPFAM" id="SSF53474">
    <property type="entry name" value="alpha/beta-Hydrolases"/>
    <property type="match status" value="1"/>
</dbReference>
<dbReference type="PROSITE" id="PS00120">
    <property type="entry name" value="LIPASE_SER"/>
    <property type="match status" value="1"/>
</dbReference>
<organism evidence="6">
    <name type="scientific">Mus musculus</name>
    <name type="common">Mouse</name>
    <dbReference type="NCBI Taxonomy" id="10090"/>
    <lineage>
        <taxon>Eukaryota</taxon>
        <taxon>Metazoa</taxon>
        <taxon>Chordata</taxon>
        <taxon>Craniata</taxon>
        <taxon>Vertebrata</taxon>
        <taxon>Euteleostomi</taxon>
        <taxon>Mammalia</taxon>
        <taxon>Eutheria</taxon>
        <taxon>Euarchontoglires</taxon>
        <taxon>Glires</taxon>
        <taxon>Rodentia</taxon>
        <taxon>Myomorpha</taxon>
        <taxon>Muroidea</taxon>
        <taxon>Muridae</taxon>
        <taxon>Murinae</taxon>
        <taxon>Mus</taxon>
        <taxon>Mus</taxon>
    </lineage>
</organism>
<accession>Q9CPP7</accession>
<accession>Q8BK78</accession>
<accession>Q9CPP8</accession>
<accession>Q9D6L1</accession>
<accession>Q9D6L9</accession>
<accession>Q9D6M9</accession>
<accession>Q9D6N8</accession>
<accession>Q9D6P3</accession>
<accession>Q9D6Q2</accession>
<accession>Q9D6Q3</accession>
<accession>Q9D6Q6</accession>
<accession>Q9D6S5</accession>
<accession>Q9D6T5</accession>
<accession>Q9D6X0</accession>
<accession>Q9D760</accession>
<accession>Q9D766</accession>
<accession>Q9D767</accession>
<accession>Q9D796</accession>
<accession>Q9D798</accession>
<accession>Q9D7C5</accession>
<reference key="1">
    <citation type="journal article" date="2005" name="Science">
        <title>The transcriptional landscape of the mammalian genome.</title>
        <authorList>
            <person name="Carninci P."/>
            <person name="Kasukawa T."/>
            <person name="Katayama S."/>
            <person name="Gough J."/>
            <person name="Frith M.C."/>
            <person name="Maeda N."/>
            <person name="Oyama R."/>
            <person name="Ravasi T."/>
            <person name="Lenhard B."/>
            <person name="Wells C."/>
            <person name="Kodzius R."/>
            <person name="Shimokawa K."/>
            <person name="Bajic V.B."/>
            <person name="Brenner S.E."/>
            <person name="Batalov S."/>
            <person name="Forrest A.R."/>
            <person name="Zavolan M."/>
            <person name="Davis M.J."/>
            <person name="Wilming L.G."/>
            <person name="Aidinis V."/>
            <person name="Allen J.E."/>
            <person name="Ambesi-Impiombato A."/>
            <person name="Apweiler R."/>
            <person name="Aturaliya R.N."/>
            <person name="Bailey T.L."/>
            <person name="Bansal M."/>
            <person name="Baxter L."/>
            <person name="Beisel K.W."/>
            <person name="Bersano T."/>
            <person name="Bono H."/>
            <person name="Chalk A.M."/>
            <person name="Chiu K.P."/>
            <person name="Choudhary V."/>
            <person name="Christoffels A."/>
            <person name="Clutterbuck D.R."/>
            <person name="Crowe M.L."/>
            <person name="Dalla E."/>
            <person name="Dalrymple B.P."/>
            <person name="de Bono B."/>
            <person name="Della Gatta G."/>
            <person name="di Bernardo D."/>
            <person name="Down T."/>
            <person name="Engstrom P."/>
            <person name="Fagiolini M."/>
            <person name="Faulkner G."/>
            <person name="Fletcher C.F."/>
            <person name="Fukushima T."/>
            <person name="Furuno M."/>
            <person name="Futaki S."/>
            <person name="Gariboldi M."/>
            <person name="Georgii-Hemming P."/>
            <person name="Gingeras T.R."/>
            <person name="Gojobori T."/>
            <person name="Green R.E."/>
            <person name="Gustincich S."/>
            <person name="Harbers M."/>
            <person name="Hayashi Y."/>
            <person name="Hensch T.K."/>
            <person name="Hirokawa N."/>
            <person name="Hill D."/>
            <person name="Huminiecki L."/>
            <person name="Iacono M."/>
            <person name="Ikeo K."/>
            <person name="Iwama A."/>
            <person name="Ishikawa T."/>
            <person name="Jakt M."/>
            <person name="Kanapin A."/>
            <person name="Katoh M."/>
            <person name="Kawasawa Y."/>
            <person name="Kelso J."/>
            <person name="Kitamura H."/>
            <person name="Kitano H."/>
            <person name="Kollias G."/>
            <person name="Krishnan S.P."/>
            <person name="Kruger A."/>
            <person name="Kummerfeld S.K."/>
            <person name="Kurochkin I.V."/>
            <person name="Lareau L.F."/>
            <person name="Lazarevic D."/>
            <person name="Lipovich L."/>
            <person name="Liu J."/>
            <person name="Liuni S."/>
            <person name="McWilliam S."/>
            <person name="Madan Babu M."/>
            <person name="Madera M."/>
            <person name="Marchionni L."/>
            <person name="Matsuda H."/>
            <person name="Matsuzawa S."/>
            <person name="Miki H."/>
            <person name="Mignone F."/>
            <person name="Miyake S."/>
            <person name="Morris K."/>
            <person name="Mottagui-Tabar S."/>
            <person name="Mulder N."/>
            <person name="Nakano N."/>
            <person name="Nakauchi H."/>
            <person name="Ng P."/>
            <person name="Nilsson R."/>
            <person name="Nishiguchi S."/>
            <person name="Nishikawa S."/>
            <person name="Nori F."/>
            <person name="Ohara O."/>
            <person name="Okazaki Y."/>
            <person name="Orlando V."/>
            <person name="Pang K.C."/>
            <person name="Pavan W.J."/>
            <person name="Pavesi G."/>
            <person name="Pesole G."/>
            <person name="Petrovsky N."/>
            <person name="Piazza S."/>
            <person name="Reed J."/>
            <person name="Reid J.F."/>
            <person name="Ring B.Z."/>
            <person name="Ringwald M."/>
            <person name="Rost B."/>
            <person name="Ruan Y."/>
            <person name="Salzberg S.L."/>
            <person name="Sandelin A."/>
            <person name="Schneider C."/>
            <person name="Schoenbach C."/>
            <person name="Sekiguchi K."/>
            <person name="Semple C.A."/>
            <person name="Seno S."/>
            <person name="Sessa L."/>
            <person name="Sheng Y."/>
            <person name="Shibata Y."/>
            <person name="Shimada H."/>
            <person name="Shimada K."/>
            <person name="Silva D."/>
            <person name="Sinclair B."/>
            <person name="Sperling S."/>
            <person name="Stupka E."/>
            <person name="Sugiura K."/>
            <person name="Sultana R."/>
            <person name="Takenaka Y."/>
            <person name="Taki K."/>
            <person name="Tammoja K."/>
            <person name="Tan S.L."/>
            <person name="Tang S."/>
            <person name="Taylor M.S."/>
            <person name="Tegner J."/>
            <person name="Teichmann S.A."/>
            <person name="Ueda H.R."/>
            <person name="van Nimwegen E."/>
            <person name="Verardo R."/>
            <person name="Wei C.L."/>
            <person name="Yagi K."/>
            <person name="Yamanishi H."/>
            <person name="Zabarovsky E."/>
            <person name="Zhu S."/>
            <person name="Zimmer A."/>
            <person name="Hide W."/>
            <person name="Bult C."/>
            <person name="Grimmond S.M."/>
            <person name="Teasdale R.D."/>
            <person name="Liu E.T."/>
            <person name="Brusic V."/>
            <person name="Quackenbush J."/>
            <person name="Wahlestedt C."/>
            <person name="Mattick J.S."/>
            <person name="Hume D.A."/>
            <person name="Kai C."/>
            <person name="Sasaki D."/>
            <person name="Tomaru Y."/>
            <person name="Fukuda S."/>
            <person name="Kanamori-Katayama M."/>
            <person name="Suzuki M."/>
            <person name="Aoki J."/>
            <person name="Arakawa T."/>
            <person name="Iida J."/>
            <person name="Imamura K."/>
            <person name="Itoh M."/>
            <person name="Kato T."/>
            <person name="Kawaji H."/>
            <person name="Kawagashira N."/>
            <person name="Kawashima T."/>
            <person name="Kojima M."/>
            <person name="Kondo S."/>
            <person name="Konno H."/>
            <person name="Nakano K."/>
            <person name="Ninomiya N."/>
            <person name="Nishio T."/>
            <person name="Okada M."/>
            <person name="Plessy C."/>
            <person name="Shibata K."/>
            <person name="Shiraki T."/>
            <person name="Suzuki S."/>
            <person name="Tagami M."/>
            <person name="Waki K."/>
            <person name="Watahiki A."/>
            <person name="Okamura-Oho Y."/>
            <person name="Suzuki H."/>
            <person name="Kawai J."/>
            <person name="Hayashizaki Y."/>
        </authorList>
    </citation>
    <scope>NUCLEOTIDE SEQUENCE [LARGE SCALE MRNA]</scope>
    <source>
        <strain>C57BL/6J</strain>
        <tissue>Tongue</tissue>
    </source>
</reference>
<reference key="2">
    <citation type="journal article" date="2004" name="Genome Res.">
        <title>The status, quality, and expansion of the NIH full-length cDNA project: the Mammalian Gene Collection (MGC).</title>
        <authorList>
            <consortium name="The MGC Project Team"/>
        </authorList>
    </citation>
    <scope>NUCLEOTIDE SEQUENCE [LARGE SCALE MRNA]</scope>
    <source>
        <tissue>Heart</tissue>
        <tissue>Lung</tissue>
    </source>
</reference>
<feature type="signal peptide" evidence="1">
    <location>
        <begin position="1"/>
        <end position="18"/>
    </location>
</feature>
<feature type="chain" id="PRO_0000017767" description="Gastric triacylglycerol lipase">
    <location>
        <begin position="19"/>
        <end position="395"/>
    </location>
</feature>
<feature type="domain" description="AB hydrolase-1" evidence="3">
    <location>
        <begin position="81"/>
        <end position="376"/>
    </location>
</feature>
<feature type="active site" description="Nucleophile" evidence="1">
    <location>
        <position position="171"/>
    </location>
</feature>
<feature type="active site" description="Charge relay system" evidence="4">
    <location>
        <position position="342"/>
    </location>
</feature>
<feature type="active site" description="Charge relay system" evidence="4">
    <location>
        <position position="371"/>
    </location>
</feature>
<feature type="glycosylation site" description="N-linked (GlcNAc...) asparagine" evidence="3">
    <location>
        <position position="33"/>
    </location>
</feature>
<feature type="glycosylation site" description="N-linked (GlcNAc...) asparagine" evidence="3">
    <location>
        <position position="270"/>
    </location>
</feature>
<feature type="disulfide bond" evidence="1">
    <location>
        <begin position="245"/>
        <end position="254"/>
    </location>
</feature>
<feature type="sequence conflict" description="In Ref. 1; BAB26703." evidence="5" ref="1">
    <original>E</original>
    <variation>V</variation>
    <location>
        <position position="46"/>
    </location>
</feature>
<feature type="sequence conflict" description="In Ref. 1; BAB26350." evidence="5" ref="1">
    <original>Q</original>
    <variation>L</variation>
    <location>
        <position position="82"/>
    </location>
</feature>
<feature type="sequence conflict" description="In Ref. 1; BAB26697." evidence="5" ref="1">
    <original>I</original>
    <variation>V</variation>
    <location>
        <position position="86"/>
    </location>
</feature>
<feature type="sequence conflict" description="In Ref. 1; BAB26240." evidence="5" ref="1">
    <original>T</original>
    <variation>K</variation>
    <location>
        <position position="90"/>
    </location>
</feature>
<feature type="sequence conflict" description="In Ref. 1; BAB26746." evidence="5" ref="1">
    <original>A</original>
    <variation>T</variation>
    <location>
        <position position="151"/>
    </location>
</feature>
<feature type="sequence conflict" description="In Ref. 1; BAB26346." evidence="5" ref="1">
    <original>T</original>
    <variation>A</variation>
    <location>
        <position position="175"/>
    </location>
</feature>
<feature type="sequence conflict" description="In Ref. 1; BAB26733/BAB26746." evidence="5" ref="1">
    <original>S</original>
    <variation>F</variation>
    <location>
        <position position="182"/>
    </location>
</feature>
<feature type="sequence conflict" description="In Ref. 1; BAB26746." evidence="5" ref="1">
    <original>LA</original>
    <variation>FT</variation>
    <location>
        <begin position="197"/>
        <end position="198"/>
    </location>
</feature>
<feature type="sequence conflict" description="In Ref. 1; BAB26733." evidence="5" ref="1">
    <original>A</original>
    <variation>T</variation>
    <location>
        <position position="198"/>
    </location>
</feature>
<feature type="sequence conflict" description="In Ref. 1; BAB26725." evidence="5" ref="1">
    <original>V</original>
    <variation>I</variation>
    <location>
        <position position="200"/>
    </location>
</feature>
<feature type="sequence conflict" description="In Ref. 1; BAB26240." evidence="5" ref="1">
    <original>SL</original>
    <variation>HF</variation>
    <location>
        <begin position="214"/>
        <end position="215"/>
    </location>
</feature>
<feature type="sequence conflict" description="In Ref. 1; BAB26733." evidence="5" ref="1">
    <original>L</original>
    <variation>F</variation>
    <location>
        <position position="215"/>
    </location>
</feature>
<feature type="sequence conflict" description="In Ref. 1; BAB26784." evidence="5" ref="1">
    <original>P</original>
    <variation>H</variation>
    <location>
        <position position="217"/>
    </location>
</feature>
<feature type="sequence conflict" description="In Ref. 1; BAB26704." evidence="5" ref="1">
    <original>P</original>
    <variation>L</variation>
    <location>
        <position position="217"/>
    </location>
</feature>
<feature type="sequence conflict" description="In Ref. 1; BAB26703/BAB26766." evidence="5" ref="1">
    <original>L</original>
    <variation>F</variation>
    <location>
        <position position="220"/>
    </location>
</feature>
<feature type="sequence conflict" description="In Ref. 1; BAB26287." evidence="5" ref="1">
    <original>L</original>
    <variation>F</variation>
    <location>
        <position position="221"/>
    </location>
</feature>
<feature type="sequence conflict" description="In Ref. 1; BAB26350." evidence="5" ref="1">
    <original>H</original>
    <variation>Y</variation>
    <location>
        <position position="233"/>
    </location>
</feature>
<feature type="sequence conflict" description="In Ref. 1; BAB26283." evidence="5" ref="1">
    <original>F</original>
    <variation>L</variation>
    <location>
        <position position="274"/>
    </location>
</feature>
<feature type="sequence conflict" description="In Ref. 1; BAB26201/BAB26711." evidence="5" ref="1">
    <original>D</original>
    <variation>G</variation>
    <location>
        <position position="275"/>
    </location>
</feature>
<feature type="sequence conflict" description="In Ref. 1; BAC36048." evidence="5" ref="1">
    <original>G</original>
    <variation>P</variation>
    <location>
        <position position="279"/>
    </location>
</feature>
<feature type="sequence conflict" description="In Ref. 1; BAB26556." evidence="5" ref="1">
    <original>Q</original>
    <variation>R</variation>
    <location>
        <position position="312"/>
    </location>
</feature>
<feature type="sequence conflict" description="In Ref. 1; BAB26784." evidence="5" ref="1">
    <original>M</original>
    <variation>L</variation>
    <location>
        <position position="314"/>
    </location>
</feature>
<feature type="sequence conflict" description="In Ref. 1; BAB26629." evidence="5" ref="1">
    <original>T</original>
    <variation>S</variation>
    <location>
        <position position="321"/>
    </location>
</feature>
<feature type="sequence conflict" description="In Ref. 1; BAB26359." evidence="5" ref="1">
    <original>D</original>
    <variation>Y</variation>
    <location>
        <position position="373"/>
    </location>
</feature>
<evidence type="ECO:0000250" key="1">
    <source>
        <dbReference type="UniProtKB" id="P07098"/>
    </source>
</evidence>
<evidence type="ECO:0000250" key="2">
    <source>
        <dbReference type="UniProtKB" id="P80035"/>
    </source>
</evidence>
<evidence type="ECO:0000255" key="3"/>
<evidence type="ECO:0000255" key="4">
    <source>
        <dbReference type="PROSITE-ProRule" id="PRU10037"/>
    </source>
</evidence>
<evidence type="ECO:0000305" key="5"/>
<evidence type="ECO:0000312" key="6">
    <source>
        <dbReference type="EMBL" id="BAB26787.1"/>
    </source>
</evidence>
<protein>
    <recommendedName>
        <fullName>Gastric triacylglycerol lipase</fullName>
        <shortName>GL</shortName>
        <shortName>Gastric lipase</shortName>
        <ecNumber evidence="1">3.1.1.3</ecNumber>
    </recommendedName>
</protein>
<keyword id="KW-1015">Disulfide bond</keyword>
<keyword id="KW-0325">Glycoprotein</keyword>
<keyword id="KW-0378">Hydrolase</keyword>
<keyword id="KW-0442">Lipid degradation</keyword>
<keyword id="KW-0443">Lipid metabolism</keyword>
<keyword id="KW-1185">Reference proteome</keyword>
<keyword id="KW-0964">Secreted</keyword>
<keyword id="KW-0732">Signal</keyword>
<gene>
    <name type="primary">Lipf</name>
</gene>
<comment type="function">
    <text evidence="1">Catalyzes the hydrolysis of triacylglycerols to yield free fatty acids, diacylglycerol, monoacylglycerol, and glycerol (By similarity). Shows a preferential hydrolysis at the sn-3 position of triacylglycerol (By similarity).</text>
</comment>
<comment type="catalytic activity">
    <reaction evidence="1">
        <text>a triacylglycerol + H2O = a diacylglycerol + a fatty acid + H(+)</text>
        <dbReference type="Rhea" id="RHEA:12044"/>
        <dbReference type="ChEBI" id="CHEBI:15377"/>
        <dbReference type="ChEBI" id="CHEBI:15378"/>
        <dbReference type="ChEBI" id="CHEBI:17855"/>
        <dbReference type="ChEBI" id="CHEBI:18035"/>
        <dbReference type="ChEBI" id="CHEBI:28868"/>
        <dbReference type="EC" id="3.1.1.3"/>
    </reaction>
</comment>
<comment type="catalytic activity">
    <reaction evidence="1">
        <text>1,2,3-tri-(9Z-octadecenoyl)-glycerol + H2O = 1,2-di-(9Z-octadecenoyl)-sn-glycerol + (9Z)-octadecenoate + H(+)</text>
        <dbReference type="Rhea" id="RHEA:39931"/>
        <dbReference type="ChEBI" id="CHEBI:15377"/>
        <dbReference type="ChEBI" id="CHEBI:15378"/>
        <dbReference type="ChEBI" id="CHEBI:30823"/>
        <dbReference type="ChEBI" id="CHEBI:52333"/>
        <dbReference type="ChEBI" id="CHEBI:53753"/>
    </reaction>
    <physiologicalReaction direction="left-to-right" evidence="1">
        <dbReference type="Rhea" id="RHEA:39932"/>
    </physiologicalReaction>
</comment>
<comment type="catalytic activity">
    <reaction evidence="1">
        <text>1,2,3-trioctanoylglycerol + H2O = 1,2-dioctanoyl-sn-glycerol + octanoate + H(+)</text>
        <dbReference type="Rhea" id="RHEA:40047"/>
        <dbReference type="ChEBI" id="CHEBI:15377"/>
        <dbReference type="ChEBI" id="CHEBI:15378"/>
        <dbReference type="ChEBI" id="CHEBI:25646"/>
        <dbReference type="ChEBI" id="CHEBI:76978"/>
        <dbReference type="ChEBI" id="CHEBI:76979"/>
    </reaction>
    <physiologicalReaction direction="left-to-right" evidence="1">
        <dbReference type="Rhea" id="RHEA:40048"/>
    </physiologicalReaction>
</comment>
<comment type="subcellular location">
    <subcellularLocation>
        <location evidence="2">Secreted</location>
    </subcellularLocation>
</comment>
<comment type="similarity">
    <text evidence="5">Belongs to the AB hydrolase superfamily. Lipase family.</text>
</comment>
<proteinExistence type="evidence at transcript level"/>